<feature type="chain" id="PRO_0000426789" description="Phenolphthiocerol/phthiocerol polyketide synthase subunit A">
    <location>
        <begin position="1"/>
        <end position="1876"/>
    </location>
</feature>
<feature type="domain" description="Carrier 1" evidence="3">
    <location>
        <begin position="9"/>
        <end position="83"/>
    </location>
</feature>
<feature type="domain" description="Ketosynthase family 3 (KS3)" evidence="4">
    <location>
        <begin position="101"/>
        <end position="526"/>
    </location>
</feature>
<feature type="domain" description="PKS/mFAS DH" evidence="5">
    <location>
        <begin position="997"/>
        <end position="1267"/>
    </location>
</feature>
<feature type="domain" description="Carrier 2" evidence="3">
    <location>
        <begin position="1759"/>
        <end position="1836"/>
    </location>
</feature>
<feature type="region of interest" description="Acyltransferase" evidence="1">
    <location>
        <begin position="626"/>
        <end position="950"/>
    </location>
</feature>
<feature type="region of interest" description="N-terminal hotdog fold" evidence="5">
    <location>
        <begin position="997"/>
        <end position="1112"/>
    </location>
</feature>
<feature type="region of interest" description="Disordered" evidence="7">
    <location>
        <begin position="1102"/>
        <end position="1130"/>
    </location>
</feature>
<feature type="region of interest" description="C-terminal hotdog fold" evidence="5">
    <location>
        <begin position="1130"/>
        <end position="1267"/>
    </location>
</feature>
<feature type="region of interest" description="Beta-ketoacyl reductase" evidence="1">
    <location>
        <begin position="1491"/>
        <end position="1728"/>
    </location>
</feature>
<feature type="compositionally biased region" description="Low complexity" evidence="7">
    <location>
        <begin position="1106"/>
        <end position="1115"/>
    </location>
</feature>
<feature type="active site" description="For beta-ketoacyl synthase activity" evidence="4">
    <location>
        <position position="273"/>
    </location>
</feature>
<feature type="active site" description="For beta-ketoacyl synthase activity" evidence="4">
    <location>
        <position position="408"/>
    </location>
</feature>
<feature type="active site" description="For beta-ketoacyl synthase activity" evidence="4">
    <location>
        <position position="448"/>
    </location>
</feature>
<feature type="active site" description="For malonyltransferase activity" evidence="6">
    <location>
        <position position="720"/>
    </location>
</feature>
<feature type="active site" description="Proton acceptor; for dehydratase activity" evidence="5">
    <location>
        <position position="1027"/>
    </location>
</feature>
<feature type="active site" description="Proton donor; for dehydratase activity" evidence="5">
    <location>
        <position position="1186"/>
    </location>
</feature>
<feature type="binding site" evidence="1">
    <location>
        <begin position="1491"/>
        <end position="1551"/>
    </location>
    <ligand>
        <name>NADP(+)</name>
        <dbReference type="ChEBI" id="CHEBI:58349"/>
    </ligand>
</feature>
<feature type="modified residue" description="O-(pantetheine 4'-phosphoryl)serine" evidence="3">
    <location>
        <position position="43"/>
    </location>
</feature>
<feature type="modified residue" description="O-(pantetheine 4'-phosphoryl)serine" evidence="3">
    <location>
        <position position="1796"/>
    </location>
</feature>
<comment type="function">
    <text evidence="2">Part of the PpsABCDE complex involved in the biosynthesis of the lipid core common to phthiocerols and phenolphthiocerols by successive additions of malonyl-CoA or methylmalonyl-CoA extender units. PpsA can accept as substrate the activated forms of either icosanoyl (C20), docosanoyl (C22) or lignoceroyl (C24) groups from FadD26, or a (4-hydroxyphenyl)-C17 or (4-hydroxyphenyl)-C19 fatty acyl from FadD29. PpsA initiates the biosynthesis and extends its substrate using a malonyl-CoA extender unit. The PpsB and PpsC proteins add the second and third malonyl-CoA extender units. PpsD adds an (R)-methylmalonyl unit and PpsE adds a second (R)-methylmalonyl unit. The incorporation of the methylmalonyl units results in formation of two branched methyl groups in the elongated product.</text>
</comment>
<comment type="catalytic activity">
    <reaction evidence="2">
        <text>icosanoyl-[(phenol)carboxyphthiodiolenone synthase] + 2 (S)-methylmalonyl-CoA + 3 malonyl-CoA + 5 NADPH + 10 H(+) = C32-carboxyphthiodiolenone-[(phenol)carboxyphthiodiolenone synthase] + 5 CO2 + 5 NADP(+) + 5 CoA + 2 H2O</text>
        <dbReference type="Rhea" id="RHEA:57748"/>
        <dbReference type="Rhea" id="RHEA-COMP:14985"/>
        <dbReference type="Rhea" id="RHEA-COMP:14986"/>
        <dbReference type="ChEBI" id="CHEBI:15377"/>
        <dbReference type="ChEBI" id="CHEBI:15378"/>
        <dbReference type="ChEBI" id="CHEBI:16526"/>
        <dbReference type="ChEBI" id="CHEBI:57287"/>
        <dbReference type="ChEBI" id="CHEBI:57327"/>
        <dbReference type="ChEBI" id="CHEBI:57384"/>
        <dbReference type="ChEBI" id="CHEBI:57783"/>
        <dbReference type="ChEBI" id="CHEBI:58349"/>
        <dbReference type="ChEBI" id="CHEBI:87848"/>
        <dbReference type="ChEBI" id="CHEBI:142236"/>
        <dbReference type="EC" id="2.3.1.292"/>
    </reaction>
</comment>
<comment type="catalytic activity">
    <reaction evidence="2">
        <text>docosanoyl-[(phenol)carboxyphthiodiolenone synthase] + 2 (S)-methylmalonyl-CoA + 3 malonyl-CoA + 5 NADPH + 10 H(+) = C34-carboxyphthiodiolenone-[(phenol)carboxyphthiodiolenone synthase] + 5 CO2 + 5 NADP(+) + 5 CoA + 2 H2O</text>
        <dbReference type="Rhea" id="RHEA:57752"/>
        <dbReference type="Rhea" id="RHEA-COMP:14987"/>
        <dbReference type="Rhea" id="RHEA-COMP:14988"/>
        <dbReference type="ChEBI" id="CHEBI:15377"/>
        <dbReference type="ChEBI" id="CHEBI:15378"/>
        <dbReference type="ChEBI" id="CHEBI:16526"/>
        <dbReference type="ChEBI" id="CHEBI:57287"/>
        <dbReference type="ChEBI" id="CHEBI:57327"/>
        <dbReference type="ChEBI" id="CHEBI:57384"/>
        <dbReference type="ChEBI" id="CHEBI:57783"/>
        <dbReference type="ChEBI" id="CHEBI:58349"/>
        <dbReference type="ChEBI" id="CHEBI:142237"/>
        <dbReference type="ChEBI" id="CHEBI:142238"/>
        <dbReference type="EC" id="2.3.1.292"/>
    </reaction>
</comment>
<comment type="catalytic activity">
    <reaction evidence="2">
        <text>17-(4-hydroxyphenyl)heptadecanoyl-[(phenol)carboxyphthiodiolenone synthase] + 2 (S)-methylmalonyl-CoA + 3 malonyl-CoA + 5 NADPH + 10 H(+) = C35-(phenol)carboxyphthiodiolenone-[(phenol)carboxyphthiodiolenone synthase] + 5 CO2 + 5 NADP(+) + 5 CoA + 2 H2O</text>
        <dbReference type="Rhea" id="RHEA:57756"/>
        <dbReference type="Rhea" id="RHEA-COMP:14272"/>
        <dbReference type="Rhea" id="RHEA-COMP:14989"/>
        <dbReference type="ChEBI" id="CHEBI:15377"/>
        <dbReference type="ChEBI" id="CHEBI:15378"/>
        <dbReference type="ChEBI" id="CHEBI:16526"/>
        <dbReference type="ChEBI" id="CHEBI:57287"/>
        <dbReference type="ChEBI" id="CHEBI:57327"/>
        <dbReference type="ChEBI" id="CHEBI:57384"/>
        <dbReference type="ChEBI" id="CHEBI:57783"/>
        <dbReference type="ChEBI" id="CHEBI:58349"/>
        <dbReference type="ChEBI" id="CHEBI:133300"/>
        <dbReference type="ChEBI" id="CHEBI:142259"/>
        <dbReference type="EC" id="2.3.1.292"/>
    </reaction>
</comment>
<comment type="catalytic activity">
    <reaction evidence="2">
        <text>19-(4-hydroxyphenyl)nonadecanoyl-[(phenol)carboxyphthiodiolenone synthase] + 2 (S)-methylmalonyl-CoA + 3 malonyl-CoA + 5 NADPH + 10 H(+) = C37-(phenol)carboxyphthiodiolenone-[(phenol)carboxyphthiodiolenone synthase] + 5 CO2 + 5 NADP(+) + 5 CoA + 2 H2O</text>
        <dbReference type="Rhea" id="RHEA:57760"/>
        <dbReference type="Rhea" id="RHEA-COMP:14273"/>
        <dbReference type="Rhea" id="RHEA-COMP:14990"/>
        <dbReference type="ChEBI" id="CHEBI:15377"/>
        <dbReference type="ChEBI" id="CHEBI:15378"/>
        <dbReference type="ChEBI" id="CHEBI:16526"/>
        <dbReference type="ChEBI" id="CHEBI:57287"/>
        <dbReference type="ChEBI" id="CHEBI:57327"/>
        <dbReference type="ChEBI" id="CHEBI:57384"/>
        <dbReference type="ChEBI" id="CHEBI:57783"/>
        <dbReference type="ChEBI" id="CHEBI:58349"/>
        <dbReference type="ChEBI" id="CHEBI:133301"/>
        <dbReference type="ChEBI" id="CHEBI:142260"/>
        <dbReference type="EC" id="2.3.1.292"/>
    </reaction>
</comment>
<comment type="cofactor">
    <cofactor evidence="2">
        <name>NADP(+)</name>
        <dbReference type="ChEBI" id="CHEBI:58349"/>
    </cofactor>
</comment>
<comment type="cofactor">
    <cofactor evidence="1">
        <name>pantetheine 4'-phosphate</name>
        <dbReference type="ChEBI" id="CHEBI:47942"/>
    </cofactor>
    <text evidence="1">Binds 2 phosphopantetheines covalently.</text>
</comment>
<comment type="pathway">
    <text evidence="2">Lipid metabolism; fatty acid biosynthesis.</text>
</comment>
<name>PPSA_MYCTO</name>
<evidence type="ECO:0000250" key="1"/>
<evidence type="ECO:0000250" key="2">
    <source>
        <dbReference type="UniProtKB" id="P9WQE7"/>
    </source>
</evidence>
<evidence type="ECO:0000255" key="3">
    <source>
        <dbReference type="PROSITE-ProRule" id="PRU00258"/>
    </source>
</evidence>
<evidence type="ECO:0000255" key="4">
    <source>
        <dbReference type="PROSITE-ProRule" id="PRU01348"/>
    </source>
</evidence>
<evidence type="ECO:0000255" key="5">
    <source>
        <dbReference type="PROSITE-ProRule" id="PRU01363"/>
    </source>
</evidence>
<evidence type="ECO:0000255" key="6">
    <source>
        <dbReference type="PROSITE-ProRule" id="PRU10022"/>
    </source>
</evidence>
<evidence type="ECO:0000256" key="7">
    <source>
        <dbReference type="SAM" id="MobiDB-lite"/>
    </source>
</evidence>
<evidence type="ECO:0000305" key="8"/>
<dbReference type="EC" id="2.3.1.292" evidence="2"/>
<dbReference type="EMBL" id="AE000516">
    <property type="protein sequence ID" value="AAK47328.1"/>
    <property type="molecule type" value="Genomic_DNA"/>
</dbReference>
<dbReference type="PIR" id="C70749">
    <property type="entry name" value="C70749"/>
</dbReference>
<dbReference type="RefSeq" id="WP_003917710.1">
    <property type="nucleotide sequence ID" value="NC_002755.2"/>
</dbReference>
<dbReference type="SMR" id="P9WQE6"/>
<dbReference type="KEGG" id="mtc:MT3000"/>
<dbReference type="HOGENOM" id="CLU_000022_35_3_11"/>
<dbReference type="UniPathway" id="UPA00094"/>
<dbReference type="Proteomes" id="UP000001020">
    <property type="component" value="Chromosome"/>
</dbReference>
<dbReference type="GO" id="GO:0034081">
    <property type="term" value="C:polyketide synthase complex"/>
    <property type="evidence" value="ECO:0000250"/>
    <property type="project" value="UniProtKB"/>
</dbReference>
<dbReference type="GO" id="GO:0004315">
    <property type="term" value="F:3-oxoacyl-[acyl-carrier-protein] synthase activity"/>
    <property type="evidence" value="ECO:0007669"/>
    <property type="project" value="InterPro"/>
</dbReference>
<dbReference type="GO" id="GO:0004312">
    <property type="term" value="F:fatty acid synthase activity"/>
    <property type="evidence" value="ECO:0007669"/>
    <property type="project" value="TreeGrafter"/>
</dbReference>
<dbReference type="GO" id="GO:0016491">
    <property type="term" value="F:oxidoreductase activity"/>
    <property type="evidence" value="ECO:0007669"/>
    <property type="project" value="UniProtKB-KW"/>
</dbReference>
<dbReference type="GO" id="GO:0031177">
    <property type="term" value="F:phosphopantetheine binding"/>
    <property type="evidence" value="ECO:0007669"/>
    <property type="project" value="InterPro"/>
</dbReference>
<dbReference type="GO" id="GO:0071766">
    <property type="term" value="P:Actinobacterium-type cell wall biogenesis"/>
    <property type="evidence" value="ECO:0000250"/>
    <property type="project" value="UniProtKB"/>
</dbReference>
<dbReference type="GO" id="GO:0006633">
    <property type="term" value="P:fatty acid biosynthetic process"/>
    <property type="evidence" value="ECO:0007669"/>
    <property type="project" value="UniProtKB-UniPathway"/>
</dbReference>
<dbReference type="GO" id="GO:0097041">
    <property type="term" value="P:phenolic phthiocerol biosynthetic process"/>
    <property type="evidence" value="ECO:0000250"/>
    <property type="project" value="UniProtKB"/>
</dbReference>
<dbReference type="GO" id="GO:0097040">
    <property type="term" value="P:phthiocerol biosynthetic process"/>
    <property type="evidence" value="ECO:0000250"/>
    <property type="project" value="UniProtKB"/>
</dbReference>
<dbReference type="CDD" id="cd05274">
    <property type="entry name" value="KR_FAS_SDR_x"/>
    <property type="match status" value="1"/>
</dbReference>
<dbReference type="CDD" id="cd00833">
    <property type="entry name" value="PKS"/>
    <property type="match status" value="1"/>
</dbReference>
<dbReference type="FunFam" id="1.10.1200.10:FF:000025">
    <property type="entry name" value="Phenolpthiocerol synthesis polyketide synthase PpsA"/>
    <property type="match status" value="1"/>
</dbReference>
<dbReference type="FunFam" id="1.10.1200.10:FF:000019">
    <property type="entry name" value="Phenolpthiocerol synthesis type-I polyketide synthase PPSA"/>
    <property type="match status" value="1"/>
</dbReference>
<dbReference type="FunFam" id="3.30.70.250:FF:000003">
    <property type="entry name" value="Polyketide beta-ketoacyl synthase Pks3"/>
    <property type="match status" value="1"/>
</dbReference>
<dbReference type="FunFam" id="3.40.47.10:FF:000019">
    <property type="entry name" value="Polyketide synthase type I"/>
    <property type="match status" value="1"/>
</dbReference>
<dbReference type="Gene3D" id="3.40.47.10">
    <property type="match status" value="1"/>
</dbReference>
<dbReference type="Gene3D" id="1.10.1200.10">
    <property type="entry name" value="ACP-like"/>
    <property type="match status" value="2"/>
</dbReference>
<dbReference type="Gene3D" id="3.30.70.250">
    <property type="entry name" value="Malonyl-CoA ACP transacylase, ACP-binding"/>
    <property type="match status" value="1"/>
</dbReference>
<dbReference type="Gene3D" id="3.40.366.10">
    <property type="entry name" value="Malonyl-Coenzyme A Acyl Carrier Protein, domain 2"/>
    <property type="match status" value="1"/>
</dbReference>
<dbReference type="Gene3D" id="3.40.50.720">
    <property type="entry name" value="NAD(P)-binding Rossmann-like Domain"/>
    <property type="match status" value="1"/>
</dbReference>
<dbReference type="Gene3D" id="3.10.129.110">
    <property type="entry name" value="Polyketide synthase dehydratase"/>
    <property type="match status" value="1"/>
</dbReference>
<dbReference type="InterPro" id="IPR001227">
    <property type="entry name" value="Ac_transferase_dom_sf"/>
</dbReference>
<dbReference type="InterPro" id="IPR036736">
    <property type="entry name" value="ACP-like_sf"/>
</dbReference>
<dbReference type="InterPro" id="IPR014043">
    <property type="entry name" value="Acyl_transferase_dom"/>
</dbReference>
<dbReference type="InterPro" id="IPR016035">
    <property type="entry name" value="Acyl_Trfase/lysoPLipase"/>
</dbReference>
<dbReference type="InterPro" id="IPR018201">
    <property type="entry name" value="Ketoacyl_synth_AS"/>
</dbReference>
<dbReference type="InterPro" id="IPR014031">
    <property type="entry name" value="Ketoacyl_synth_C"/>
</dbReference>
<dbReference type="InterPro" id="IPR014030">
    <property type="entry name" value="Ketoacyl_synth_N"/>
</dbReference>
<dbReference type="InterPro" id="IPR016036">
    <property type="entry name" value="Malonyl_transacylase_ACP-bd"/>
</dbReference>
<dbReference type="InterPro" id="IPR036291">
    <property type="entry name" value="NAD(P)-bd_dom_sf"/>
</dbReference>
<dbReference type="InterPro" id="IPR032821">
    <property type="entry name" value="PKS_assoc"/>
</dbReference>
<dbReference type="InterPro" id="IPR020841">
    <property type="entry name" value="PKS_Beta-ketoAc_synthase_dom"/>
</dbReference>
<dbReference type="InterPro" id="IPR042104">
    <property type="entry name" value="PKS_dehydratase_sf"/>
</dbReference>
<dbReference type="InterPro" id="IPR020807">
    <property type="entry name" value="PKS_DH"/>
</dbReference>
<dbReference type="InterPro" id="IPR049552">
    <property type="entry name" value="PKS_DH_N"/>
</dbReference>
<dbReference type="InterPro" id="IPR013968">
    <property type="entry name" value="PKS_KR"/>
</dbReference>
<dbReference type="InterPro" id="IPR049900">
    <property type="entry name" value="PKS_mFAS_DH"/>
</dbReference>
<dbReference type="InterPro" id="IPR050091">
    <property type="entry name" value="PKS_NRPS_Biosynth_Enz"/>
</dbReference>
<dbReference type="InterPro" id="IPR020806">
    <property type="entry name" value="PKS_PP-bd"/>
</dbReference>
<dbReference type="InterPro" id="IPR009081">
    <property type="entry name" value="PP-bd_ACP"/>
</dbReference>
<dbReference type="InterPro" id="IPR006162">
    <property type="entry name" value="Ppantetheine_attach_site"/>
</dbReference>
<dbReference type="InterPro" id="IPR016039">
    <property type="entry name" value="Thiolase-like"/>
</dbReference>
<dbReference type="PANTHER" id="PTHR43775">
    <property type="entry name" value="FATTY ACID SYNTHASE"/>
    <property type="match status" value="1"/>
</dbReference>
<dbReference type="PANTHER" id="PTHR43775:SF37">
    <property type="entry name" value="SI:DKEY-61P9.11"/>
    <property type="match status" value="1"/>
</dbReference>
<dbReference type="Pfam" id="PF00698">
    <property type="entry name" value="Acyl_transf_1"/>
    <property type="match status" value="1"/>
</dbReference>
<dbReference type="Pfam" id="PF16197">
    <property type="entry name" value="KAsynt_C_assoc"/>
    <property type="match status" value="1"/>
</dbReference>
<dbReference type="Pfam" id="PF00109">
    <property type="entry name" value="ketoacyl-synt"/>
    <property type="match status" value="1"/>
</dbReference>
<dbReference type="Pfam" id="PF02801">
    <property type="entry name" value="Ketoacyl-synt_C"/>
    <property type="match status" value="1"/>
</dbReference>
<dbReference type="Pfam" id="PF08659">
    <property type="entry name" value="KR"/>
    <property type="match status" value="1"/>
</dbReference>
<dbReference type="Pfam" id="PF21089">
    <property type="entry name" value="PKS_DH_N"/>
    <property type="match status" value="1"/>
</dbReference>
<dbReference type="Pfam" id="PF00550">
    <property type="entry name" value="PP-binding"/>
    <property type="match status" value="2"/>
</dbReference>
<dbReference type="SMART" id="SM00827">
    <property type="entry name" value="PKS_AT"/>
    <property type="match status" value="1"/>
</dbReference>
<dbReference type="SMART" id="SM00826">
    <property type="entry name" value="PKS_DH"/>
    <property type="match status" value="1"/>
</dbReference>
<dbReference type="SMART" id="SM00822">
    <property type="entry name" value="PKS_KR"/>
    <property type="match status" value="1"/>
</dbReference>
<dbReference type="SMART" id="SM00825">
    <property type="entry name" value="PKS_KS"/>
    <property type="match status" value="1"/>
</dbReference>
<dbReference type="SMART" id="SM00823">
    <property type="entry name" value="PKS_PP"/>
    <property type="match status" value="2"/>
</dbReference>
<dbReference type="SMART" id="SM01294">
    <property type="entry name" value="PKS_PP_betabranch"/>
    <property type="match status" value="1"/>
</dbReference>
<dbReference type="SUPFAM" id="SSF47336">
    <property type="entry name" value="ACP-like"/>
    <property type="match status" value="2"/>
</dbReference>
<dbReference type="SUPFAM" id="SSF52151">
    <property type="entry name" value="FabD/lysophospholipase-like"/>
    <property type="match status" value="1"/>
</dbReference>
<dbReference type="SUPFAM" id="SSF51735">
    <property type="entry name" value="NAD(P)-binding Rossmann-fold domains"/>
    <property type="match status" value="2"/>
</dbReference>
<dbReference type="SUPFAM" id="SSF55048">
    <property type="entry name" value="Probable ACP-binding domain of malonyl-CoA ACP transacylase"/>
    <property type="match status" value="1"/>
</dbReference>
<dbReference type="SUPFAM" id="SSF53901">
    <property type="entry name" value="Thiolase-like"/>
    <property type="match status" value="1"/>
</dbReference>
<dbReference type="PROSITE" id="PS50075">
    <property type="entry name" value="CARRIER"/>
    <property type="match status" value="2"/>
</dbReference>
<dbReference type="PROSITE" id="PS00606">
    <property type="entry name" value="KS3_1"/>
    <property type="match status" value="1"/>
</dbReference>
<dbReference type="PROSITE" id="PS52004">
    <property type="entry name" value="KS3_2"/>
    <property type="match status" value="1"/>
</dbReference>
<dbReference type="PROSITE" id="PS00012">
    <property type="entry name" value="PHOSPHOPANTETHEINE"/>
    <property type="match status" value="1"/>
</dbReference>
<dbReference type="PROSITE" id="PS52019">
    <property type="entry name" value="PKS_MFAS_DH"/>
    <property type="match status" value="1"/>
</dbReference>
<sequence>MTGSISGEADLRHWLIDYLVTNIGCTPDEVDPDLSLADLGVSSRDAVVLSGELSELLGRTVSPIDFWEHPTINALAAYLAAPEPSPDSDAAVKRGARNSLDEPIAVVGMGCRFPGGISCPEALWDFLCERRSSISQVPPQRWQPFEGGPPEVAAALARTTRWGSFLPDIDAFDAEFFEISPSEADKMDPQQRLLLEVAWEALEHAGIPPGTLRRSATGVFAGACLSEYGAMASADLSQVDGWSNSGGAMSIIANRLSYFLDLRGPSVAVDTACSSSLVAIHLACQSLRTQDCHLAIAAGVNLLLSPAVFRGFDQVGALSPTGQCRAFDATADGFVRGEGAGVVVLKRLTDAQRDGDRVLAVICGSAVNQDGRSNGLMAPNPAAQMAVLRAAYTNAGMQPSEVDYVEAHGTGTLLGDPIEARALGTVLGRGRPEDSPLLIGSVKTNLGHTEAAAGIAGFIKTVLAVQHGQIPPNQHFETANPHIPFTDLRMKVVDTQTEWPATGHPRRAGVSSFGFGGTNAHVVIEQGQEVRPAPGQGLSPAVSTLVVAGKTMQRVSATAGMLADWMEGPGADVALADVAHTLNHHRSRQPKFGTVVARDRTQAIAGLRALAAGQHAPGVVNPAEGSPGPGTVFVYSGRGSQWAGMGRQLLADEPAFAAAVAELEPVFVEQAGFSLHDVLANGEELVGIEQIQLGLIGMQLALTELWCSYGVRPDLVIGHSMGEVAAAVVAGALTPAEGLRVTATRSRLMAPLSGQGGMALLELDAPTTEALIADFPQVTLGIYNSPRQTVIAGPTEQIDELIARVRAQNRFASRVNIEVAPHNPAMDALQPAMRSELADLTPRTPTIGIISTTYADLHTQPVFDAEHWATNMRNPVHFQQAIASAGSGADGAYHTFIEISAHPLLTQAIIDTLHSAQPGARYTSLGTLQRDTDDVVTFRTNLNKAHTIHPPHTPHPPEPHPPIPTTPWQHTRHWITTKYPAGSVGSAPRAGTLLGQHTTVATVSASPPSHLWQARLAPDAKPYQGGHRFHQVEVVPASVVLHTILSAATELGYSALSEVRFEQPIFADRPRLIQVVADNRAISLASSPAAGTPSDRWTRHVTAQLSSSPSDSASSLNEHHRANGQPPERAHRDLIPDLAELLAMRGIDGLPFSWTVASWTQHSSNLTVAIDLPEALPEGSTGPLLDAAVHLAALSDVADSRLYVPASIEQISLGDVVTGPRSSVTLNRTAHDDDGITVDVTVAAHGEVPSLSMRSLRYRALDFGLDVGRAQPPASTGPVEAYCDATNFVHTIDWQPQTVPDATHPGAEQVTHPGPVAIIGDDSAALCETLEGAGYQPAVMSDGVSQARYVVYVADSDPAGADETDVDFAVRICTEITGLVRTLAERDADKPAALWILTRGVHESVAPSALRQSFLWGLAGVIAAEHPELWGGLVDLAINDDLGEFGPALAELLAKPSKSILVRRDGVVLAPALAPVRGEPARKSLQCRPDAAYLITGGLGALGLLMADWLADRGAHRLVLTGRTPLPPRRDWQLDTLDTELRRRIDAIRALEMRGVTVEAVAADVGCREDVQALLAARDRDGAAPIRGIIHAAGITNDQLVTSMTGDAVRQVMWPKIGGSQVLHDAFPPGSVDFFYLTASAAGIFGIPGQGSYAAANSYLDALARARRQQGCHTMSLDWVAWRGLGLAADAQLVSEELARMGSRDITPSEAFTAWEFVDGYDVAQAVVVPMPAPAGADGSGANAYLLPARNWSVMAATEVRSELEQGLRRIIAAELRVPEKELDTDRPFAELGLNSLMAMAIRREAEQFVGIELSATMLFNHPTVKSLASYLAKRVAPHDVSQDNQISALSSSAGSVLDSLFDRIESAPPEAERSV</sequence>
<protein>
    <recommendedName>
        <fullName evidence="8">Phenolphthiocerol/phthiocerol polyketide synthase subunit A</fullName>
        <ecNumber evidence="2">2.3.1.292</ecNumber>
    </recommendedName>
    <alternativeName>
        <fullName>(Phenol)carboxyphthiodiolenone synthase subunit A</fullName>
    </alternativeName>
    <alternativeName>
        <fullName>Beta-ketoacyl-acyl-carrier-protein synthase I</fullName>
    </alternativeName>
    <alternativeName>
        <fullName>Phthiocerol synthesis polyketide synthase type I PpsA</fullName>
    </alternativeName>
</protein>
<gene>
    <name type="primary">ppsA</name>
    <name type="ordered locus">MT3000</name>
</gene>
<accession>P9WQE6</accession>
<accession>L0TCN4</accession>
<accession>Q10977</accession>
<proteinExistence type="inferred from homology"/>
<reference key="1">
    <citation type="journal article" date="2002" name="J. Bacteriol.">
        <title>Whole-genome comparison of Mycobacterium tuberculosis clinical and laboratory strains.</title>
        <authorList>
            <person name="Fleischmann R.D."/>
            <person name="Alland D."/>
            <person name="Eisen J.A."/>
            <person name="Carpenter L."/>
            <person name="White O."/>
            <person name="Peterson J.D."/>
            <person name="DeBoy R.T."/>
            <person name="Dodson R.J."/>
            <person name="Gwinn M.L."/>
            <person name="Haft D.H."/>
            <person name="Hickey E.K."/>
            <person name="Kolonay J.F."/>
            <person name="Nelson W.C."/>
            <person name="Umayam L.A."/>
            <person name="Ermolaeva M.D."/>
            <person name="Salzberg S.L."/>
            <person name="Delcher A."/>
            <person name="Utterback T.R."/>
            <person name="Weidman J.F."/>
            <person name="Khouri H.M."/>
            <person name="Gill J."/>
            <person name="Mikula A."/>
            <person name="Bishai W."/>
            <person name="Jacobs W.R. Jr."/>
            <person name="Venter J.C."/>
            <person name="Fraser C.M."/>
        </authorList>
    </citation>
    <scope>NUCLEOTIDE SEQUENCE [LARGE SCALE GENOMIC DNA]</scope>
    <source>
        <strain>CDC 1551 / Oshkosh</strain>
    </source>
</reference>
<organism>
    <name type="scientific">Mycobacterium tuberculosis (strain CDC 1551 / Oshkosh)</name>
    <dbReference type="NCBI Taxonomy" id="83331"/>
    <lineage>
        <taxon>Bacteria</taxon>
        <taxon>Bacillati</taxon>
        <taxon>Actinomycetota</taxon>
        <taxon>Actinomycetes</taxon>
        <taxon>Mycobacteriales</taxon>
        <taxon>Mycobacteriaceae</taxon>
        <taxon>Mycobacterium</taxon>
        <taxon>Mycobacterium tuberculosis complex</taxon>
    </lineage>
</organism>
<keyword id="KW-0276">Fatty acid metabolism</keyword>
<keyword id="KW-0443">Lipid metabolism</keyword>
<keyword id="KW-0511">Multifunctional enzyme</keyword>
<keyword id="KW-0521">NADP</keyword>
<keyword id="KW-0560">Oxidoreductase</keyword>
<keyword id="KW-0596">Phosphopantetheine</keyword>
<keyword id="KW-0597">Phosphoprotein</keyword>
<keyword id="KW-1185">Reference proteome</keyword>
<keyword id="KW-0677">Repeat</keyword>
<keyword id="KW-0808">Transferase</keyword>